<reference key="1">
    <citation type="journal article" date="2008" name="J. Biol. Chem.">
        <title>Biochemical and Structural Insights into Bacterial Organelle Form and Biogenesis.</title>
        <authorList>
            <person name="Parsons J.B."/>
            <person name="Dinesh S.D."/>
            <person name="Deery E."/>
            <person name="Leech H.K."/>
            <person name="Brindley A.A."/>
            <person name="Heldt D."/>
            <person name="Frank S."/>
            <person name="Smales C.M."/>
            <person name="Lunsdorf H."/>
            <person name="Rambach A."/>
            <person name="Gass M.H."/>
            <person name="Bleloch A."/>
            <person name="McClean K.J."/>
            <person name="Munro A.W."/>
            <person name="Rigby S.E.J."/>
            <person name="Warren M.J."/>
            <person name="Prentice M.B."/>
        </authorList>
    </citation>
    <scope>NUCLEOTIDE SEQUENCE [GENOMIC DNA]</scope>
    <scope>FUNCTION</scope>
    <scope>IDENTIFICATION BY MASS SPECTROMETRY</scope>
    <scope>CATALYTIC ACTIVITY</scope>
    <scope>PATHWAY</scope>
    <scope>SUBCELLULAR LOCATION</scope>
</reference>
<proteinExistence type="evidence at protein level"/>
<gene>
    <name evidence="3" type="primary">pduE</name>
</gene>
<comment type="function">
    <text evidence="5">Part of the PduCDE complex that catalyzes the dehydration of 1,2-propanediol (1,2-PD) to propionaldehyde. Localized in the bacterial microcompartment (BMC) dedicated to 1,2-PD degradation.</text>
</comment>
<comment type="function">
    <text evidence="2">Expression of a cosmid containing the full 21-gene pdu operon in E.coli allows E.coli to grow on 1,2-propanediol (1,2-PD) with the appearance of BMCs in its cytoplasm.</text>
</comment>
<comment type="function">
    <text evidence="4">The 1,2-PD-specific bacterial microcompartment (BMC) concentrates low levels of 1,2-PD catabolic enzymes, concentrates volatile reaction intermediates thus enhancing pathway flux and keeps the level of toxic, mutagenic propionaldehyde low.</text>
</comment>
<comment type="catalytic activity">
    <reaction evidence="5">
        <text>propane-1,2-diol = propanal + H2O</text>
        <dbReference type="Rhea" id="RHEA:14569"/>
        <dbReference type="ChEBI" id="CHEBI:15377"/>
        <dbReference type="ChEBI" id="CHEBI:16997"/>
        <dbReference type="ChEBI" id="CHEBI:17153"/>
        <dbReference type="EC" id="4.2.1.28"/>
    </reaction>
</comment>
<comment type="cofactor">
    <cofactor evidence="1">
        <name>adenosylcob(III)alamin</name>
        <dbReference type="ChEBI" id="CHEBI:18408"/>
    </cofactor>
</comment>
<comment type="pathway">
    <text evidence="2">Polyol metabolism; 1,2-propanediol degradation.</text>
</comment>
<comment type="subunit">
    <text evidence="1">The propanediol dehydratase enzyme is a heterotrimeric complex composed of a large (PduC), a medium (PduD) and a small (PduE) subunit.</text>
</comment>
<comment type="subcellular location">
    <subcellularLocation>
        <location evidence="2">Bacterial microcompartment</location>
    </subcellularLocation>
</comment>
<comment type="similarity">
    <text evidence="4">Belongs to the diol/glycerol dehydratase small subunit family.</text>
</comment>
<keyword id="KW-1283">Bacterial microcompartment</keyword>
<keyword id="KW-0846">Cobalamin</keyword>
<keyword id="KW-0170">Cobalt</keyword>
<keyword id="KW-0456">Lyase</keyword>
<accession>P0DUM9</accession>
<organism>
    <name type="scientific">Citrobacter freundii</name>
    <dbReference type="NCBI Taxonomy" id="546"/>
    <lineage>
        <taxon>Bacteria</taxon>
        <taxon>Pseudomonadati</taxon>
        <taxon>Pseudomonadota</taxon>
        <taxon>Gammaproteobacteria</taxon>
        <taxon>Enterobacterales</taxon>
        <taxon>Enterobacteriaceae</taxon>
        <taxon>Citrobacter</taxon>
        <taxon>Citrobacter freundii complex</taxon>
    </lineage>
</organism>
<feature type="chain" id="PRO_0000454260" description="Propanediol dehydratase small subunit">
    <location>
        <begin position="1"/>
        <end position="172"/>
    </location>
</feature>
<evidence type="ECO:0000250" key="1">
    <source>
        <dbReference type="UniProtKB" id="O31042"/>
    </source>
</evidence>
<evidence type="ECO:0000269" key="2">
    <source>
    </source>
</evidence>
<evidence type="ECO:0000303" key="3">
    <source>
    </source>
</evidence>
<evidence type="ECO:0000305" key="4"/>
<evidence type="ECO:0000305" key="5">
    <source>
    </source>
</evidence>
<sequence length="172" mass="19234">MNTDAIESMVRDVLSRMNSLQGESATPVAASSSAHTAKVTDYPLANKHPEWVKTATNKTLDDFTLENVLSNKVTAQDMRITPETLRLQAEIAKDAGRDRLAMNFERAAELTAVPDDRILEIYNALRPYRSTKDELMAIADDLENRYQAKICAAFVREAAALYVERKKLKGDD</sequence>
<name>PDUE_CITFR</name>
<protein>
    <recommendedName>
        <fullName>Propanediol dehydratase small subunit</fullName>
        <ecNumber evidence="5">4.2.1.28</ecNumber>
    </recommendedName>
    <alternativeName>
        <fullName evidence="3">Diol dehydratase small subunit</fullName>
        <shortName>DDH small subunit</shortName>
    </alternativeName>
    <alternativeName>
        <fullName>Propanediol utilization protein PduE</fullName>
    </alternativeName>
</protein>
<dbReference type="EC" id="4.2.1.28" evidence="5"/>
<dbReference type="EMBL" id="AM498294">
    <property type="protein sequence ID" value="CAM57287.1"/>
    <property type="molecule type" value="Genomic_DNA"/>
</dbReference>
<dbReference type="SMR" id="P0DUM9"/>
<dbReference type="UniPathway" id="UPA00621"/>
<dbReference type="GO" id="GO:0031469">
    <property type="term" value="C:bacterial microcompartment"/>
    <property type="evidence" value="ECO:0007669"/>
    <property type="project" value="UniProtKB-SubCell"/>
</dbReference>
<dbReference type="GO" id="GO:0031419">
    <property type="term" value="F:cobalamin binding"/>
    <property type="evidence" value="ECO:0007669"/>
    <property type="project" value="UniProtKB-KW"/>
</dbReference>
<dbReference type="GO" id="GO:0016829">
    <property type="term" value="F:lyase activity"/>
    <property type="evidence" value="ECO:0007669"/>
    <property type="project" value="UniProtKB-KW"/>
</dbReference>
<dbReference type="GO" id="GO:0051144">
    <property type="term" value="P:propanediol catabolic process"/>
    <property type="evidence" value="ECO:0007669"/>
    <property type="project" value="UniProtKB-UniPathway"/>
</dbReference>
<dbReference type="Gene3D" id="1.10.1510.20">
    <property type="entry name" value="Propanediol/glycerol dehydratase, small subunit"/>
    <property type="match status" value="1"/>
</dbReference>
<dbReference type="InterPro" id="IPR003207">
    <property type="entry name" value="Ppandiol/glycerol_DeHydtase_su"/>
</dbReference>
<dbReference type="InterPro" id="IPR036091">
    <property type="entry name" value="Prodiol/glycerol_DeHase__sf_su"/>
</dbReference>
<dbReference type="NCBIfam" id="NF011971">
    <property type="entry name" value="PRK15443.1-2"/>
    <property type="match status" value="1"/>
</dbReference>
<dbReference type="NCBIfam" id="NF011972">
    <property type="entry name" value="PRK15443.1-3"/>
    <property type="match status" value="1"/>
</dbReference>
<dbReference type="Pfam" id="PF02287">
    <property type="entry name" value="Dehydratase_SU"/>
    <property type="match status" value="1"/>
</dbReference>
<dbReference type="PIRSF" id="PIRSF018505">
    <property type="entry name" value="Prpndl_dhdrts_sm"/>
    <property type="match status" value="1"/>
</dbReference>
<dbReference type="SUPFAM" id="SSF47148">
    <property type="entry name" value="Diol dehydratase, gamma subunit"/>
    <property type="match status" value="1"/>
</dbReference>